<dbReference type="EC" id="6.1.1.21" evidence="1"/>
<dbReference type="EMBL" id="CP001099">
    <property type="protein sequence ID" value="ACF12190.1"/>
    <property type="molecule type" value="Genomic_DNA"/>
</dbReference>
<dbReference type="RefSeq" id="WP_012503023.1">
    <property type="nucleotide sequence ID" value="NC_011027.1"/>
</dbReference>
<dbReference type="SMR" id="B3QQI7"/>
<dbReference type="STRING" id="517417.Cpar_1798"/>
<dbReference type="KEGG" id="cpc:Cpar_1798"/>
<dbReference type="eggNOG" id="COG0124">
    <property type="taxonomic scope" value="Bacteria"/>
</dbReference>
<dbReference type="HOGENOM" id="CLU_025113_1_1_10"/>
<dbReference type="OrthoDB" id="9800814at2"/>
<dbReference type="Proteomes" id="UP000008811">
    <property type="component" value="Chromosome"/>
</dbReference>
<dbReference type="GO" id="GO:0005737">
    <property type="term" value="C:cytoplasm"/>
    <property type="evidence" value="ECO:0007669"/>
    <property type="project" value="UniProtKB-SubCell"/>
</dbReference>
<dbReference type="GO" id="GO:0005524">
    <property type="term" value="F:ATP binding"/>
    <property type="evidence" value="ECO:0007669"/>
    <property type="project" value="UniProtKB-UniRule"/>
</dbReference>
<dbReference type="GO" id="GO:0004821">
    <property type="term" value="F:histidine-tRNA ligase activity"/>
    <property type="evidence" value="ECO:0007669"/>
    <property type="project" value="UniProtKB-UniRule"/>
</dbReference>
<dbReference type="GO" id="GO:0006427">
    <property type="term" value="P:histidyl-tRNA aminoacylation"/>
    <property type="evidence" value="ECO:0007669"/>
    <property type="project" value="UniProtKB-UniRule"/>
</dbReference>
<dbReference type="CDD" id="cd00773">
    <property type="entry name" value="HisRS-like_core"/>
    <property type="match status" value="1"/>
</dbReference>
<dbReference type="CDD" id="cd00859">
    <property type="entry name" value="HisRS_anticodon"/>
    <property type="match status" value="1"/>
</dbReference>
<dbReference type="Gene3D" id="3.40.50.800">
    <property type="entry name" value="Anticodon-binding domain"/>
    <property type="match status" value="1"/>
</dbReference>
<dbReference type="Gene3D" id="3.30.930.10">
    <property type="entry name" value="Bira Bifunctional Protein, Domain 2"/>
    <property type="match status" value="1"/>
</dbReference>
<dbReference type="HAMAP" id="MF_00127">
    <property type="entry name" value="His_tRNA_synth"/>
    <property type="match status" value="1"/>
</dbReference>
<dbReference type="InterPro" id="IPR006195">
    <property type="entry name" value="aa-tRNA-synth_II"/>
</dbReference>
<dbReference type="InterPro" id="IPR045864">
    <property type="entry name" value="aa-tRNA-synth_II/BPL/LPL"/>
</dbReference>
<dbReference type="InterPro" id="IPR004154">
    <property type="entry name" value="Anticodon-bd"/>
</dbReference>
<dbReference type="InterPro" id="IPR036621">
    <property type="entry name" value="Anticodon-bd_dom_sf"/>
</dbReference>
<dbReference type="InterPro" id="IPR015807">
    <property type="entry name" value="His-tRNA-ligase"/>
</dbReference>
<dbReference type="InterPro" id="IPR041715">
    <property type="entry name" value="HisRS-like_core"/>
</dbReference>
<dbReference type="InterPro" id="IPR004516">
    <property type="entry name" value="HisRS/HisZ"/>
</dbReference>
<dbReference type="InterPro" id="IPR033656">
    <property type="entry name" value="HisRS_anticodon"/>
</dbReference>
<dbReference type="NCBIfam" id="TIGR00442">
    <property type="entry name" value="hisS"/>
    <property type="match status" value="1"/>
</dbReference>
<dbReference type="PANTHER" id="PTHR43707:SF1">
    <property type="entry name" value="HISTIDINE--TRNA LIGASE, MITOCHONDRIAL-RELATED"/>
    <property type="match status" value="1"/>
</dbReference>
<dbReference type="PANTHER" id="PTHR43707">
    <property type="entry name" value="HISTIDYL-TRNA SYNTHETASE"/>
    <property type="match status" value="1"/>
</dbReference>
<dbReference type="Pfam" id="PF03129">
    <property type="entry name" value="HGTP_anticodon"/>
    <property type="match status" value="1"/>
</dbReference>
<dbReference type="Pfam" id="PF13393">
    <property type="entry name" value="tRNA-synt_His"/>
    <property type="match status" value="1"/>
</dbReference>
<dbReference type="PIRSF" id="PIRSF001549">
    <property type="entry name" value="His-tRNA_synth"/>
    <property type="match status" value="1"/>
</dbReference>
<dbReference type="SUPFAM" id="SSF52954">
    <property type="entry name" value="Class II aaRS ABD-related"/>
    <property type="match status" value="1"/>
</dbReference>
<dbReference type="SUPFAM" id="SSF55681">
    <property type="entry name" value="Class II aaRS and biotin synthetases"/>
    <property type="match status" value="1"/>
</dbReference>
<dbReference type="PROSITE" id="PS50862">
    <property type="entry name" value="AA_TRNA_LIGASE_II"/>
    <property type="match status" value="1"/>
</dbReference>
<proteinExistence type="inferred from homology"/>
<gene>
    <name evidence="1" type="primary">hisS</name>
    <name type="ordered locus">Cpar_1798</name>
</gene>
<comment type="catalytic activity">
    <reaction evidence="1">
        <text>tRNA(His) + L-histidine + ATP = L-histidyl-tRNA(His) + AMP + diphosphate + H(+)</text>
        <dbReference type="Rhea" id="RHEA:17313"/>
        <dbReference type="Rhea" id="RHEA-COMP:9665"/>
        <dbReference type="Rhea" id="RHEA-COMP:9689"/>
        <dbReference type="ChEBI" id="CHEBI:15378"/>
        <dbReference type="ChEBI" id="CHEBI:30616"/>
        <dbReference type="ChEBI" id="CHEBI:33019"/>
        <dbReference type="ChEBI" id="CHEBI:57595"/>
        <dbReference type="ChEBI" id="CHEBI:78442"/>
        <dbReference type="ChEBI" id="CHEBI:78527"/>
        <dbReference type="ChEBI" id="CHEBI:456215"/>
        <dbReference type="EC" id="6.1.1.21"/>
    </reaction>
</comment>
<comment type="subunit">
    <text evidence="1">Homodimer.</text>
</comment>
<comment type="subcellular location">
    <subcellularLocation>
        <location evidence="1">Cytoplasm</location>
    </subcellularLocation>
</comment>
<comment type="similarity">
    <text evidence="1">Belongs to the class-II aminoacyl-tRNA synthetase family.</text>
</comment>
<feature type="chain" id="PRO_1000095537" description="Histidine--tRNA ligase">
    <location>
        <begin position="1"/>
        <end position="430"/>
    </location>
</feature>
<name>SYH_CHLP8</name>
<sequence length="430" mass="48078">MAQLQAVKGTRDIFPDEIARWHYVEGVIRSVAELYGFSEVRTPVFEYTELFQRGIGATTDIVGKEMFTFQPDPNGRSLTLRPEMTAGVMRACLQKNLLSQSPVSKLYYISDLFRKERPQAGRQRQFTQFGAELLGVSNPAAVAEVLTFMMQVFSSLGLHGLRLRINSLGDLDDRARYREALRDYFMPYQNDLDEPSKERLEKNPLRILDSKNPALQEMIAGAPRLYASLKPESVADFEKVLSYLDDRQIAYDVDHLLVRGLDYYCHAAFEVTSSELGAQDAIGGGGRYDGLARELGASNDLPAVGFAVGMERLMIAMEKQGLFATLNPHGPLVYVVVQQKELTDHAMQVAFRLRKSGLKTEIDLAGRSMKAQMRDANRMGAAYALFIGQSEMESGHYALKNLETSEQTSLDLDAIIEVLHEAVSQESARP</sequence>
<evidence type="ECO:0000255" key="1">
    <source>
        <dbReference type="HAMAP-Rule" id="MF_00127"/>
    </source>
</evidence>
<protein>
    <recommendedName>
        <fullName evidence="1">Histidine--tRNA ligase</fullName>
        <ecNumber evidence="1">6.1.1.21</ecNumber>
    </recommendedName>
    <alternativeName>
        <fullName evidence="1">Histidyl-tRNA synthetase</fullName>
        <shortName evidence="1">HisRS</shortName>
    </alternativeName>
</protein>
<accession>B3QQI7</accession>
<organism>
    <name type="scientific">Chlorobaculum parvum (strain DSM 263 / NCIMB 8327)</name>
    <name type="common">Chlorobium vibrioforme subsp. thiosulfatophilum</name>
    <dbReference type="NCBI Taxonomy" id="517417"/>
    <lineage>
        <taxon>Bacteria</taxon>
        <taxon>Pseudomonadati</taxon>
        <taxon>Chlorobiota</taxon>
        <taxon>Chlorobiia</taxon>
        <taxon>Chlorobiales</taxon>
        <taxon>Chlorobiaceae</taxon>
        <taxon>Chlorobaculum</taxon>
    </lineage>
</organism>
<reference key="1">
    <citation type="submission" date="2008-06" db="EMBL/GenBank/DDBJ databases">
        <title>Complete sequence of Chlorobaculum parvum NCIB 8327.</title>
        <authorList>
            <consortium name="US DOE Joint Genome Institute"/>
            <person name="Lucas S."/>
            <person name="Copeland A."/>
            <person name="Lapidus A."/>
            <person name="Glavina del Rio T."/>
            <person name="Dalin E."/>
            <person name="Tice H."/>
            <person name="Bruce D."/>
            <person name="Goodwin L."/>
            <person name="Pitluck S."/>
            <person name="Schmutz J."/>
            <person name="Larimer F."/>
            <person name="Land M."/>
            <person name="Hauser L."/>
            <person name="Kyrpides N."/>
            <person name="Mikhailova N."/>
            <person name="Zhao F."/>
            <person name="Li T."/>
            <person name="Liu Z."/>
            <person name="Overmann J."/>
            <person name="Bryant D.A."/>
            <person name="Richardson P."/>
        </authorList>
    </citation>
    <scope>NUCLEOTIDE SEQUENCE [LARGE SCALE GENOMIC DNA]</scope>
    <source>
        <strain>DSM 263 / NCIMB 8327</strain>
    </source>
</reference>
<keyword id="KW-0030">Aminoacyl-tRNA synthetase</keyword>
<keyword id="KW-0067">ATP-binding</keyword>
<keyword id="KW-0963">Cytoplasm</keyword>
<keyword id="KW-0436">Ligase</keyword>
<keyword id="KW-0547">Nucleotide-binding</keyword>
<keyword id="KW-0648">Protein biosynthesis</keyword>